<evidence type="ECO:0000255" key="1"/>
<evidence type="ECO:0000255" key="2">
    <source>
        <dbReference type="PROSITE-ProRule" id="PRU00498"/>
    </source>
</evidence>
<evidence type="ECO:0000269" key="3">
    <source>
    </source>
</evidence>
<evidence type="ECO:0000269" key="4">
    <source>
    </source>
</evidence>
<evidence type="ECO:0000269" key="5">
    <source>
    </source>
</evidence>
<evidence type="ECO:0000305" key="6"/>
<feature type="signal peptide" evidence="1">
    <location>
        <begin position="1"/>
        <end position="20"/>
    </location>
</feature>
<feature type="chain" id="PRO_0000149662" description="Exostosin-1 homolog" evidence="1">
    <location>
        <begin position="21"/>
        <end position="382"/>
    </location>
</feature>
<feature type="glycosylation site" description="N-linked (GlcNAc...) asparagine" evidence="2">
    <location>
        <position position="268"/>
    </location>
</feature>
<keyword id="KW-0256">Endoplasmic reticulum</keyword>
<keyword id="KW-0325">Glycoprotein</keyword>
<keyword id="KW-0333">Golgi apparatus</keyword>
<keyword id="KW-1185">Reference proteome</keyword>
<keyword id="KW-0732">Signal</keyword>
<reference key="1">
    <citation type="journal article" date="2007" name="J. Biol. Chem.">
        <title>Expression of rib-1, a Caenorhabditis elegans homolog of the human tumor suppressor EXT genes, is indispensable for heparan sulfate synthesis and embryonic morphogenesis.</title>
        <authorList>
            <person name="Kitagawa H."/>
            <person name="Izumikawa T."/>
            <person name="Mizuguchi S."/>
            <person name="Dejima K."/>
            <person name="Nomura K.H."/>
            <person name="Egusa N."/>
            <person name="Taniguchi F."/>
            <person name="Tamura J."/>
            <person name="Gengyo-Ando K."/>
            <person name="Mitani S."/>
            <person name="Nomura K."/>
            <person name="Sugahara K."/>
        </authorList>
    </citation>
    <scope>NUCLEOTIDE SEQUENCE [MRNA]</scope>
    <scope>FUNCTION</scope>
    <scope>INTERACTION WITH RIB-2</scope>
</reference>
<reference key="2">
    <citation type="journal article" date="1998" name="Science">
        <title>Genome sequence of the nematode C. elegans: a platform for investigating biology.</title>
        <authorList>
            <consortium name="The C. elegans sequencing consortium"/>
        </authorList>
    </citation>
    <scope>NUCLEOTIDE SEQUENCE [LARGE SCALE GENOMIC DNA]</scope>
    <source>
        <strain>Bristol N2</strain>
    </source>
</reference>
<reference key="3">
    <citation type="journal article" date="1997" name="Genome Res.">
        <title>The structure of the human multiple exostoses 2 gene and characterization of homologs in mouse and Caenorhabditis elegans.</title>
        <authorList>
            <person name="Clines G.A."/>
            <person name="Ashley J.A."/>
            <person name="Shah S."/>
            <person name="Lovett M."/>
        </authorList>
    </citation>
    <scope>NUCLEOTIDE SEQUENCE [MRNA] OF 2-382</scope>
</reference>
<reference key="4">
    <citation type="journal article" date="2006" name="Dev. Biol.">
        <title>C. elegans pharyngeal morphogenesis requires both de novo synthesis of pyrimidines and synthesis of heparan sulfate proteoglycans.</title>
        <authorList>
            <person name="Franks D.M."/>
            <person name="Izumikawa T."/>
            <person name="Kitagawa H."/>
            <person name="Sugahara K."/>
            <person name="Okkema P.G."/>
        </authorList>
    </citation>
    <scope>FUNCTION</scope>
</reference>
<reference key="5">
    <citation type="journal article" date="2013" name="Science">
        <title>An epidermal microRNA regulates neuronal migration through control of the cellular glycosylation state.</title>
        <authorList>
            <person name="Pedersen M.E."/>
            <person name="Snieckute G."/>
            <person name="Kagias K."/>
            <person name="Nehammer C."/>
            <person name="Multhaupt H.A."/>
            <person name="Couchman J.R."/>
            <person name="Pocock R."/>
        </authorList>
    </citation>
    <scope>FUNCTION</scope>
    <scope>DISRUPTION PHENOTYPE</scope>
</reference>
<proteinExistence type="evidence at protein level"/>
<accession>O01704</accession>
<accession>A4F1W7</accession>
<accession>Q9U3J6</accession>
<dbReference type="EMBL" id="AB241458">
    <property type="protein sequence ID" value="BAF48989.1"/>
    <property type="molecule type" value="mRNA"/>
</dbReference>
<dbReference type="EMBL" id="Z73425">
    <property type="protein sequence ID" value="CAB61014.1"/>
    <property type="molecule type" value="Genomic_DNA"/>
</dbReference>
<dbReference type="EMBL" id="U94834">
    <property type="protein sequence ID" value="AAC47509.1"/>
    <property type="molecule type" value="mRNA"/>
</dbReference>
<dbReference type="RefSeq" id="NP_502180.1">
    <property type="nucleotide sequence ID" value="NM_069779.6"/>
</dbReference>
<dbReference type="SMR" id="O01704"/>
<dbReference type="BioGRID" id="43177">
    <property type="interactions" value="1"/>
</dbReference>
<dbReference type="FunCoup" id="O01704">
    <property type="interactions" value="18"/>
</dbReference>
<dbReference type="STRING" id="6239.F12F6.3a.1"/>
<dbReference type="CAZy" id="GT47">
    <property type="family name" value="Glycosyltransferase Family 47"/>
</dbReference>
<dbReference type="GlyCosmos" id="O01704">
    <property type="glycosylation" value="1 site, No reported glycans"/>
</dbReference>
<dbReference type="PaxDb" id="6239-F12F6.3.2"/>
<dbReference type="EnsemblMetazoa" id="F12F6.3a.1">
    <property type="protein sequence ID" value="F12F6.3a.1"/>
    <property type="gene ID" value="WBGene00004360"/>
</dbReference>
<dbReference type="GeneID" id="178080"/>
<dbReference type="KEGG" id="cel:CELE_F12F6.3"/>
<dbReference type="UCSC" id="F12F6.3.2">
    <property type="organism name" value="c. elegans"/>
</dbReference>
<dbReference type="AGR" id="WB:WBGene00004360"/>
<dbReference type="CTD" id="178080"/>
<dbReference type="WormBase" id="F12F6.3a">
    <property type="protein sequence ID" value="CE24898"/>
    <property type="gene ID" value="WBGene00004360"/>
    <property type="gene designation" value="rib-1"/>
</dbReference>
<dbReference type="eggNOG" id="KOG1021">
    <property type="taxonomic scope" value="Eukaryota"/>
</dbReference>
<dbReference type="GeneTree" id="ENSGT00940000163960"/>
<dbReference type="HOGENOM" id="CLU_013906_5_1_1"/>
<dbReference type="InParanoid" id="O01704"/>
<dbReference type="OMA" id="IFNFYHG"/>
<dbReference type="OrthoDB" id="1924787at2759"/>
<dbReference type="PhylomeDB" id="O01704"/>
<dbReference type="PRO" id="PR:O01704"/>
<dbReference type="Proteomes" id="UP000001940">
    <property type="component" value="Chromosome IV"/>
</dbReference>
<dbReference type="Bgee" id="WBGene00004360">
    <property type="expression patterns" value="Expressed in germ line (C elegans) and 4 other cell types or tissues"/>
</dbReference>
<dbReference type="ExpressionAtlas" id="O01704">
    <property type="expression patterns" value="baseline and differential"/>
</dbReference>
<dbReference type="GO" id="GO:0005783">
    <property type="term" value="C:endoplasmic reticulum"/>
    <property type="evidence" value="ECO:0007669"/>
    <property type="project" value="UniProtKB-SubCell"/>
</dbReference>
<dbReference type="GO" id="GO:0005794">
    <property type="term" value="C:Golgi apparatus"/>
    <property type="evidence" value="ECO:0000318"/>
    <property type="project" value="GO_Central"/>
</dbReference>
<dbReference type="GO" id="GO:0032991">
    <property type="term" value="C:protein-containing complex"/>
    <property type="evidence" value="ECO:0000314"/>
    <property type="project" value="WormBase"/>
</dbReference>
<dbReference type="GO" id="GO:0019899">
    <property type="term" value="F:enzyme binding"/>
    <property type="evidence" value="ECO:0000353"/>
    <property type="project" value="WormBase"/>
</dbReference>
<dbReference type="GO" id="GO:0016757">
    <property type="term" value="F:glycosyltransferase activity"/>
    <property type="evidence" value="ECO:0000318"/>
    <property type="project" value="GO_Central"/>
</dbReference>
<dbReference type="GO" id="GO:0015012">
    <property type="term" value="P:heparan sulfate proteoglycan biosynthetic process"/>
    <property type="evidence" value="ECO:0000314"/>
    <property type="project" value="WormBase"/>
</dbReference>
<dbReference type="GO" id="GO:0160094">
    <property type="term" value="P:nematode pharynx development"/>
    <property type="evidence" value="ECO:0000315"/>
    <property type="project" value="WormBase"/>
</dbReference>
<dbReference type="GO" id="GO:0006486">
    <property type="term" value="P:protein glycosylation"/>
    <property type="evidence" value="ECO:0007669"/>
    <property type="project" value="InterPro"/>
</dbReference>
<dbReference type="InterPro" id="IPR004263">
    <property type="entry name" value="Exostosin"/>
</dbReference>
<dbReference type="InterPro" id="IPR040911">
    <property type="entry name" value="Exostosin_GT47"/>
</dbReference>
<dbReference type="PANTHER" id="PTHR11062">
    <property type="entry name" value="EXOSTOSIN HEPARAN SULFATE GLYCOSYLTRANSFERASE -RELATED"/>
    <property type="match status" value="1"/>
</dbReference>
<dbReference type="PANTHER" id="PTHR11062:SF129">
    <property type="entry name" value="EXOSTOSIN-1"/>
    <property type="match status" value="1"/>
</dbReference>
<dbReference type="Pfam" id="PF03016">
    <property type="entry name" value="Exostosin_GT47"/>
    <property type="match status" value="1"/>
</dbReference>
<organism>
    <name type="scientific">Caenorhabditis elegans</name>
    <dbReference type="NCBI Taxonomy" id="6239"/>
    <lineage>
        <taxon>Eukaryota</taxon>
        <taxon>Metazoa</taxon>
        <taxon>Ecdysozoa</taxon>
        <taxon>Nematoda</taxon>
        <taxon>Chromadorea</taxon>
        <taxon>Rhabditida</taxon>
        <taxon>Rhabditina</taxon>
        <taxon>Rhabditomorpha</taxon>
        <taxon>Rhabditoidea</taxon>
        <taxon>Rhabditidae</taxon>
        <taxon>Peloderinae</taxon>
        <taxon>Caenorhabditis</taxon>
    </lineage>
</organism>
<sequence length="382" mass="44926">MQNVMKFHLVIFMLFGSVRLQNPTIERKQCTMSNCFDFSKCSTSKKVYIHPMEKRFEESPQSVIYSKILKHFLESNHYTNDPNEACIFLLGIDTTDRDVRSQNYVKNVNDYIESLDPSVWNNGRNHLIFNFYHGTFPDYDDHNLNFDTGEAMIARASSSENNFIKVFDVSLPLFHENHPYEIKESKSERNDDRIENQRKYLVSFKGKRYVYGIGSGTRNLVHHLHNGDDIVMVTTCKHNNDWQVYQDDRCQRDNDEYDRWEYDELLANSTFCLVPRGRRLGSFRFLETLRSGCVPVVISDSWILPFSETIDWNSAAIVVAERDALSIPELLMSTSRRRVKELRESARNVYDAYLRSIQVISDHVLRIIFKRIDNKIELEDHQ</sequence>
<name>EXT1_CAEEL</name>
<gene>
    <name type="primary">rib-1</name>
    <name type="ORF">F12F6.3</name>
</gene>
<protein>
    <recommendedName>
        <fullName evidence="6">Exostosin-1 homolog</fullName>
    </recommendedName>
    <alternativeName>
        <fullName>Multiple exostoses homolog 1</fullName>
    </alternativeName>
    <alternativeName>
        <fullName>Related to mammalian RIB protein 1</fullName>
    </alternativeName>
</protein>
<comment type="function">
    <text evidence="3 4 5">Required for the biosynthesis of heparan sulfate by positively regulating N-acetylglucosamine transferase II (GlcNAcT-II) and glucuronyl transferase II (GlcAT-II) activities of glycosyltransferase rib-2 (PubMed:17237233). Probably not directly involved in chondroitin sulfate biosynthesis but negatively regulates chondroitin sulfate levels (PubMed:16828468, PubMed:17237233). Maternally required for normal ventral epidermal enclosure and for embryo elongation during the early stages of embryonic development (PubMed:17237233). In addition, involved in the elongation of the pharyngeal isthmus and in the organization of the actin cytoskeleton in the pharyngeal muscles during the later stages embryonic development (PubMed:16828468). In adults, regulates egg-laying and the normal morphogenesis of the vulva (PubMed:17237233). Also involved in the directed migration of hermaphrodite-specific neurons (PubMed:17237233, PubMed:24052309).</text>
</comment>
<comment type="subunit">
    <text evidence="4">Interacts with rib-2.</text>
</comment>
<comment type="subcellular location">
    <subcellularLocation>
        <location evidence="6">Endoplasmic reticulum</location>
    </subcellularLocation>
    <subcellularLocation>
        <location evidence="6">Golgi apparatus</location>
    </subcellularLocation>
</comment>
<comment type="disruption phenotype">
    <text evidence="5">RNAi-mediated knockdown results in the failure of hermaphrodite-specific neurons to migrate to their correct position associated with a defect in axonal guidance.</text>
</comment>
<comment type="miscellaneous">
    <text evidence="4">Does not display any N-acetylglucosamine transferase II (GlcNAcT-II) and glucuronyl transferase II (GlcAT-II) activities when expressed alone in vitro.</text>
</comment>
<comment type="similarity">
    <text evidence="6">Belongs to the glycosyltransferase 47 family.</text>
</comment>